<organism>
    <name type="scientific">Mus musculus</name>
    <name type="common">Mouse</name>
    <dbReference type="NCBI Taxonomy" id="10090"/>
    <lineage>
        <taxon>Eukaryota</taxon>
        <taxon>Metazoa</taxon>
        <taxon>Chordata</taxon>
        <taxon>Craniata</taxon>
        <taxon>Vertebrata</taxon>
        <taxon>Euteleostomi</taxon>
        <taxon>Mammalia</taxon>
        <taxon>Eutheria</taxon>
        <taxon>Euarchontoglires</taxon>
        <taxon>Glires</taxon>
        <taxon>Rodentia</taxon>
        <taxon>Myomorpha</taxon>
        <taxon>Muroidea</taxon>
        <taxon>Muridae</taxon>
        <taxon>Murinae</taxon>
        <taxon>Mus</taxon>
        <taxon>Mus</taxon>
    </lineage>
</organism>
<sequence length="389" mass="43912">MAASFPEGVPETEDGKRPQFGHRFLSDPARVFHHNAWDNVKWSEEQAAAAERKVQENSSPLVCPEKQVDYEVNAHKYWDDFYRIHENGFFKDRHWLFTEFPELAPSHSHLTGVPLEKQRSDVCEDGPGLTAEQHKCSCASPGCETQVPPLEEPVTQKLGHLEISGEEFPGSSATYRILEVGCGVGNTVFPILQTNNNPNLFVYCCDFSATAIELLKTNSQYDPSRCYAFVHDLCDEDQSYPVPEDSLDVIVLIFVLSAIVPDKMQKAISKLSRLLKPGGVMLLRDYGRYDMAQLRFKKGQCLSGNFYVRGDGTRVYFFTQGELDTLFTAAGLEKVQNLVDRRLQVNRGKQLTMYRVWIQCKYSKPLALRSSQHVPIPHATESSSHSGLL</sequence>
<keyword id="KW-0025">Alternative splicing</keyword>
<keyword id="KW-0963">Cytoplasm</keyword>
<keyword id="KW-0489">Methyltransferase</keyword>
<keyword id="KW-1185">Reference proteome</keyword>
<keyword id="KW-0949">S-adenosyl-L-methionine</keyword>
<keyword id="KW-0808">Transferase</keyword>
<keyword id="KW-0819">tRNA processing</keyword>
<name>METL2_MOUSE</name>
<reference key="1">
    <citation type="journal article" date="2005" name="Science">
        <title>The transcriptional landscape of the mammalian genome.</title>
        <authorList>
            <person name="Carninci P."/>
            <person name="Kasukawa T."/>
            <person name="Katayama S."/>
            <person name="Gough J."/>
            <person name="Frith M.C."/>
            <person name="Maeda N."/>
            <person name="Oyama R."/>
            <person name="Ravasi T."/>
            <person name="Lenhard B."/>
            <person name="Wells C."/>
            <person name="Kodzius R."/>
            <person name="Shimokawa K."/>
            <person name="Bajic V.B."/>
            <person name="Brenner S.E."/>
            <person name="Batalov S."/>
            <person name="Forrest A.R."/>
            <person name="Zavolan M."/>
            <person name="Davis M.J."/>
            <person name="Wilming L.G."/>
            <person name="Aidinis V."/>
            <person name="Allen J.E."/>
            <person name="Ambesi-Impiombato A."/>
            <person name="Apweiler R."/>
            <person name="Aturaliya R.N."/>
            <person name="Bailey T.L."/>
            <person name="Bansal M."/>
            <person name="Baxter L."/>
            <person name="Beisel K.W."/>
            <person name="Bersano T."/>
            <person name="Bono H."/>
            <person name="Chalk A.M."/>
            <person name="Chiu K.P."/>
            <person name="Choudhary V."/>
            <person name="Christoffels A."/>
            <person name="Clutterbuck D.R."/>
            <person name="Crowe M.L."/>
            <person name="Dalla E."/>
            <person name="Dalrymple B.P."/>
            <person name="de Bono B."/>
            <person name="Della Gatta G."/>
            <person name="di Bernardo D."/>
            <person name="Down T."/>
            <person name="Engstrom P."/>
            <person name="Fagiolini M."/>
            <person name="Faulkner G."/>
            <person name="Fletcher C.F."/>
            <person name="Fukushima T."/>
            <person name="Furuno M."/>
            <person name="Futaki S."/>
            <person name="Gariboldi M."/>
            <person name="Georgii-Hemming P."/>
            <person name="Gingeras T.R."/>
            <person name="Gojobori T."/>
            <person name="Green R.E."/>
            <person name="Gustincich S."/>
            <person name="Harbers M."/>
            <person name="Hayashi Y."/>
            <person name="Hensch T.K."/>
            <person name="Hirokawa N."/>
            <person name="Hill D."/>
            <person name="Huminiecki L."/>
            <person name="Iacono M."/>
            <person name="Ikeo K."/>
            <person name="Iwama A."/>
            <person name="Ishikawa T."/>
            <person name="Jakt M."/>
            <person name="Kanapin A."/>
            <person name="Katoh M."/>
            <person name="Kawasawa Y."/>
            <person name="Kelso J."/>
            <person name="Kitamura H."/>
            <person name="Kitano H."/>
            <person name="Kollias G."/>
            <person name="Krishnan S.P."/>
            <person name="Kruger A."/>
            <person name="Kummerfeld S.K."/>
            <person name="Kurochkin I.V."/>
            <person name="Lareau L.F."/>
            <person name="Lazarevic D."/>
            <person name="Lipovich L."/>
            <person name="Liu J."/>
            <person name="Liuni S."/>
            <person name="McWilliam S."/>
            <person name="Madan Babu M."/>
            <person name="Madera M."/>
            <person name="Marchionni L."/>
            <person name="Matsuda H."/>
            <person name="Matsuzawa S."/>
            <person name="Miki H."/>
            <person name="Mignone F."/>
            <person name="Miyake S."/>
            <person name="Morris K."/>
            <person name="Mottagui-Tabar S."/>
            <person name="Mulder N."/>
            <person name="Nakano N."/>
            <person name="Nakauchi H."/>
            <person name="Ng P."/>
            <person name="Nilsson R."/>
            <person name="Nishiguchi S."/>
            <person name="Nishikawa S."/>
            <person name="Nori F."/>
            <person name="Ohara O."/>
            <person name="Okazaki Y."/>
            <person name="Orlando V."/>
            <person name="Pang K.C."/>
            <person name="Pavan W.J."/>
            <person name="Pavesi G."/>
            <person name="Pesole G."/>
            <person name="Petrovsky N."/>
            <person name="Piazza S."/>
            <person name="Reed J."/>
            <person name="Reid J.F."/>
            <person name="Ring B.Z."/>
            <person name="Ringwald M."/>
            <person name="Rost B."/>
            <person name="Ruan Y."/>
            <person name="Salzberg S.L."/>
            <person name="Sandelin A."/>
            <person name="Schneider C."/>
            <person name="Schoenbach C."/>
            <person name="Sekiguchi K."/>
            <person name="Semple C.A."/>
            <person name="Seno S."/>
            <person name="Sessa L."/>
            <person name="Sheng Y."/>
            <person name="Shibata Y."/>
            <person name="Shimada H."/>
            <person name="Shimada K."/>
            <person name="Silva D."/>
            <person name="Sinclair B."/>
            <person name="Sperling S."/>
            <person name="Stupka E."/>
            <person name="Sugiura K."/>
            <person name="Sultana R."/>
            <person name="Takenaka Y."/>
            <person name="Taki K."/>
            <person name="Tammoja K."/>
            <person name="Tan S.L."/>
            <person name="Tang S."/>
            <person name="Taylor M.S."/>
            <person name="Tegner J."/>
            <person name="Teichmann S.A."/>
            <person name="Ueda H.R."/>
            <person name="van Nimwegen E."/>
            <person name="Verardo R."/>
            <person name="Wei C.L."/>
            <person name="Yagi K."/>
            <person name="Yamanishi H."/>
            <person name="Zabarovsky E."/>
            <person name="Zhu S."/>
            <person name="Zimmer A."/>
            <person name="Hide W."/>
            <person name="Bult C."/>
            <person name="Grimmond S.M."/>
            <person name="Teasdale R.D."/>
            <person name="Liu E.T."/>
            <person name="Brusic V."/>
            <person name="Quackenbush J."/>
            <person name="Wahlestedt C."/>
            <person name="Mattick J.S."/>
            <person name="Hume D.A."/>
            <person name="Kai C."/>
            <person name="Sasaki D."/>
            <person name="Tomaru Y."/>
            <person name="Fukuda S."/>
            <person name="Kanamori-Katayama M."/>
            <person name="Suzuki M."/>
            <person name="Aoki J."/>
            <person name="Arakawa T."/>
            <person name="Iida J."/>
            <person name="Imamura K."/>
            <person name="Itoh M."/>
            <person name="Kato T."/>
            <person name="Kawaji H."/>
            <person name="Kawagashira N."/>
            <person name="Kawashima T."/>
            <person name="Kojima M."/>
            <person name="Kondo S."/>
            <person name="Konno H."/>
            <person name="Nakano K."/>
            <person name="Ninomiya N."/>
            <person name="Nishio T."/>
            <person name="Okada M."/>
            <person name="Plessy C."/>
            <person name="Shibata K."/>
            <person name="Shiraki T."/>
            <person name="Suzuki S."/>
            <person name="Tagami M."/>
            <person name="Waki K."/>
            <person name="Watahiki A."/>
            <person name="Okamura-Oho Y."/>
            <person name="Suzuki H."/>
            <person name="Kawai J."/>
            <person name="Hayashizaki Y."/>
        </authorList>
    </citation>
    <scope>NUCLEOTIDE SEQUENCE [LARGE SCALE MRNA] (ISOFORMS 1 AND 2)</scope>
    <source>
        <strain>C57BL/6J</strain>
        <tissue>Bone marrow</tissue>
        <tissue>Head</tissue>
    </source>
</reference>
<reference key="2">
    <citation type="journal article" date="2004" name="Genome Res.">
        <title>The status, quality, and expansion of the NIH full-length cDNA project: the Mammalian Gene Collection (MGC).</title>
        <authorList>
            <consortium name="The MGC Project Team"/>
        </authorList>
    </citation>
    <scope>NUCLEOTIDE SEQUENCE [LARGE SCALE MRNA] (ISOFORM 2)</scope>
    <source>
        <tissue>Heart</tissue>
    </source>
</reference>
<reference key="3">
    <citation type="journal article" date="2017" name="J. Biol. Chem.">
        <title>Three distinct 3-methylcytidine (m3C) methyltransferases modify tRNA and mRNA in mice and humans.</title>
        <authorList>
            <person name="Xu L."/>
            <person name="Liu X."/>
            <person name="Sheng N."/>
            <person name="Oo K.S."/>
            <person name="Liang J."/>
            <person name="Chionh Y.H."/>
            <person name="Xu J."/>
            <person name="Ye F."/>
            <person name="Gao Y.G."/>
            <person name="Dedon P.C."/>
            <person name="Fu X.Y."/>
        </authorList>
    </citation>
    <scope>FUNCTION</scope>
    <scope>CATALYTIC ACTIVITY</scope>
    <scope>DISRUPTION PHENOTYPE</scope>
</reference>
<feature type="chain" id="PRO_0000204453" description="tRNA N(3)-cytidine methyltransferase METTL2">
    <location>
        <begin position="1"/>
        <end position="389"/>
    </location>
</feature>
<feature type="region of interest" description="Disordered" evidence="3">
    <location>
        <begin position="1"/>
        <end position="20"/>
    </location>
</feature>
<feature type="binding site" evidence="1">
    <location>
        <position position="78"/>
    </location>
    <ligand>
        <name>S-adenosyl-L-methionine</name>
        <dbReference type="ChEBI" id="CHEBI:59789"/>
    </ligand>
</feature>
<feature type="binding site" evidence="1">
    <location>
        <position position="82"/>
    </location>
    <ligand>
        <name>S-adenosyl-L-methionine</name>
        <dbReference type="ChEBI" id="CHEBI:59789"/>
    </ligand>
</feature>
<feature type="binding site" evidence="1">
    <location>
        <position position="181"/>
    </location>
    <ligand>
        <name>S-adenosyl-L-methionine</name>
        <dbReference type="ChEBI" id="CHEBI:59789"/>
    </ligand>
</feature>
<feature type="binding site" evidence="1">
    <location>
        <position position="206"/>
    </location>
    <ligand>
        <name>S-adenosyl-L-methionine</name>
        <dbReference type="ChEBI" id="CHEBI:59789"/>
    </ligand>
</feature>
<feature type="binding site" evidence="1">
    <location>
        <position position="232"/>
    </location>
    <ligand>
        <name>S-adenosyl-L-methionine</name>
        <dbReference type="ChEBI" id="CHEBI:59789"/>
    </ligand>
</feature>
<feature type="binding site" evidence="1">
    <location>
        <position position="233"/>
    </location>
    <ligand>
        <name>S-adenosyl-L-methionine</name>
        <dbReference type="ChEBI" id="CHEBI:59789"/>
    </ligand>
</feature>
<feature type="binding site" evidence="1">
    <location>
        <position position="253"/>
    </location>
    <ligand>
        <name>S-adenosyl-L-methionine</name>
        <dbReference type="ChEBI" id="CHEBI:59789"/>
    </ligand>
</feature>
<feature type="splice variant" id="VSP_008479" description="In isoform 2." evidence="5 6">
    <location>
        <begin position="1"/>
        <end position="263"/>
    </location>
</feature>
<feature type="sequence conflict" description="In Ref. 1; BAE31989." evidence="8" ref="1">
    <original>H</original>
    <variation>R</variation>
    <location>
        <position position="134"/>
    </location>
</feature>
<feature type="sequence conflict" description="In Ref. 2; AAH89591." evidence="8" ref="2">
    <original>L</original>
    <variation>P</variation>
    <location>
        <position position="200"/>
    </location>
</feature>
<evidence type="ECO:0000250" key="1">
    <source>
        <dbReference type="UniProtKB" id="Q8TCB7"/>
    </source>
</evidence>
<evidence type="ECO:0000250" key="2">
    <source>
        <dbReference type="UniProtKB" id="Q96IZ6"/>
    </source>
</evidence>
<evidence type="ECO:0000256" key="3">
    <source>
        <dbReference type="SAM" id="MobiDB-lite"/>
    </source>
</evidence>
<evidence type="ECO:0000269" key="4">
    <source>
    </source>
</evidence>
<evidence type="ECO:0000303" key="5">
    <source>
    </source>
</evidence>
<evidence type="ECO:0000303" key="6">
    <source>
    </source>
</evidence>
<evidence type="ECO:0000303" key="7">
    <source>
    </source>
</evidence>
<evidence type="ECO:0000305" key="8"/>
<evidence type="ECO:0000305" key="9">
    <source>
    </source>
</evidence>
<evidence type="ECO:0000312" key="10">
    <source>
        <dbReference type="MGI" id="MGI:1289171"/>
    </source>
</evidence>
<proteinExistence type="evidence at protein level"/>
<accession>Q8BMK1</accession>
<accession>Q3U5T7</accession>
<accession>Q5EBH8</accession>
<accession>Q8BXC2</accession>
<protein>
    <recommendedName>
        <fullName evidence="8">tRNA N(3)-cytidine methyltransferase METTL2</fullName>
        <ecNumber evidence="9">2.1.1.-</ecNumber>
    </recommendedName>
    <alternativeName>
        <fullName evidence="8">Methyltransferase-like protein 2</fullName>
    </alternativeName>
</protein>
<comment type="function">
    <text evidence="2 4">S-adenosyl-L-methionine-dependent methyltransferase that mediates N(3)-methylcytidine modification of residue 32 of the tRNA anticodon loop of tRNA(Thr)(UGU) and tRNA(Arg)(CCU) (PubMed:28655767). N(3)-methylcytidine methylation by METTL2 requires the N6-threonylcarbamoylation of tRNA (t6A37) by the EKC/KEOPS complex as prerequisite (By similarity).</text>
</comment>
<comment type="catalytic activity">
    <reaction evidence="9">
        <text>cytidine(32) in tRNA(Thr) + S-adenosyl-L-methionine = N(3)-methylcytidine(32) in tRNA(Thr) + S-adenosyl-L-homocysteine + H(+)</text>
        <dbReference type="Rhea" id="RHEA:50960"/>
        <dbReference type="Rhea" id="RHEA-COMP:12850"/>
        <dbReference type="Rhea" id="RHEA-COMP:12852"/>
        <dbReference type="ChEBI" id="CHEBI:15378"/>
        <dbReference type="ChEBI" id="CHEBI:57856"/>
        <dbReference type="ChEBI" id="CHEBI:59789"/>
        <dbReference type="ChEBI" id="CHEBI:74894"/>
        <dbReference type="ChEBI" id="CHEBI:82748"/>
    </reaction>
    <physiologicalReaction direction="left-to-right" evidence="9">
        <dbReference type="Rhea" id="RHEA:50961"/>
    </physiologicalReaction>
</comment>
<comment type="catalytic activity">
    <reaction evidence="9">
        <text>cytidine(32) in tRNA(Arg)(CCU) + S-adenosyl-L-methionine = N(3)-methylcytidine(32) in tRNA(Arg)(CCU) + S-adenosyl-L-homocysteine + H(+)</text>
        <dbReference type="Rhea" id="RHEA:60912"/>
        <dbReference type="Rhea" id="RHEA-COMP:15710"/>
        <dbReference type="Rhea" id="RHEA-COMP:15712"/>
        <dbReference type="ChEBI" id="CHEBI:15378"/>
        <dbReference type="ChEBI" id="CHEBI:57856"/>
        <dbReference type="ChEBI" id="CHEBI:59789"/>
        <dbReference type="ChEBI" id="CHEBI:74894"/>
        <dbReference type="ChEBI" id="CHEBI:82748"/>
    </reaction>
    <physiologicalReaction direction="left-to-right" evidence="9">
        <dbReference type="Rhea" id="RHEA:60913"/>
    </physiologicalReaction>
</comment>
<comment type="subunit">
    <text evidence="2">Monomer. Interacts with DALRD3.</text>
</comment>
<comment type="subcellular location">
    <subcellularLocation>
        <location evidence="2">Cytoplasm</location>
    </subcellularLocation>
</comment>
<comment type="alternative products">
    <event type="alternative splicing"/>
    <isoform>
        <id>Q8BMK1-1</id>
        <name>1</name>
        <sequence type="displayed"/>
    </isoform>
    <isoform>
        <id>Q8BMK1-2</id>
        <name>2</name>
        <sequence type="described" ref="VSP_008479"/>
    </isoform>
</comment>
<comment type="disruption phenotype">
    <text evidence="4">Mice were born with normal Mendelian ratio without developmental defects (PubMed:28655767). Cells show reduced N(3)-methylcytidine modification in tRNA fractions (PubMed:28655767).</text>
</comment>
<comment type="similarity">
    <text evidence="8">Belongs to the methyltransferase superfamily. METL family.</text>
</comment>
<gene>
    <name evidence="7 10" type="primary">Mettl2</name>
    <name evidence="10" type="synonym">D11Ertd768e</name>
</gene>
<dbReference type="EC" id="2.1.1.-" evidence="9"/>
<dbReference type="EMBL" id="AK030739">
    <property type="protein sequence ID" value="BAC27107.1"/>
    <property type="molecule type" value="mRNA"/>
</dbReference>
<dbReference type="EMBL" id="AK048040">
    <property type="protein sequence ID" value="BAC33219.1"/>
    <property type="molecule type" value="mRNA"/>
</dbReference>
<dbReference type="EMBL" id="AK153431">
    <property type="protein sequence ID" value="BAE31989.1"/>
    <property type="molecule type" value="mRNA"/>
</dbReference>
<dbReference type="EMBL" id="BC089591">
    <property type="protein sequence ID" value="AAH89591.1"/>
    <property type="molecule type" value="mRNA"/>
</dbReference>
<dbReference type="CCDS" id="CCDS25538.1">
    <molecule id="Q8BMK1-1"/>
</dbReference>
<dbReference type="RefSeq" id="NP_766155.3">
    <molecule id="Q8BMK1-1"/>
    <property type="nucleotide sequence ID" value="NM_172567.3"/>
</dbReference>
<dbReference type="SMR" id="Q8BMK1"/>
<dbReference type="FunCoup" id="Q8BMK1">
    <property type="interactions" value="2851"/>
</dbReference>
<dbReference type="IntAct" id="Q8BMK1">
    <property type="interactions" value="1"/>
</dbReference>
<dbReference type="STRING" id="10090.ENSMUSP00000021030"/>
<dbReference type="iPTMnet" id="Q8BMK1"/>
<dbReference type="PhosphoSitePlus" id="Q8BMK1"/>
<dbReference type="PaxDb" id="10090-ENSMUSP00000021030"/>
<dbReference type="PeptideAtlas" id="Q8BMK1"/>
<dbReference type="ProteomicsDB" id="295727">
    <molecule id="Q8BMK1-1"/>
</dbReference>
<dbReference type="ProteomicsDB" id="295728">
    <molecule id="Q8BMK1-2"/>
</dbReference>
<dbReference type="Pumba" id="Q8BMK1"/>
<dbReference type="DNASU" id="52686"/>
<dbReference type="Ensembl" id="ENSMUST00000021030.8">
    <molecule id="Q8BMK1-1"/>
    <property type="protein sequence ID" value="ENSMUSP00000021030.8"/>
    <property type="gene ID" value="ENSMUSG00000020691.14"/>
</dbReference>
<dbReference type="GeneID" id="52686"/>
<dbReference type="KEGG" id="mmu:52686"/>
<dbReference type="UCSC" id="uc007lxa.2">
    <molecule id="Q8BMK1-1"/>
    <property type="organism name" value="mouse"/>
</dbReference>
<dbReference type="AGR" id="MGI:1289171"/>
<dbReference type="CTD" id="52686"/>
<dbReference type="MGI" id="MGI:1289171">
    <property type="gene designation" value="Mettl2"/>
</dbReference>
<dbReference type="VEuPathDB" id="HostDB:ENSMUSG00000020691"/>
<dbReference type="eggNOG" id="KOG2361">
    <property type="taxonomic scope" value="Eukaryota"/>
</dbReference>
<dbReference type="GeneTree" id="ENSGT00940000156059"/>
<dbReference type="HOGENOM" id="CLU_029724_0_2_1"/>
<dbReference type="InParanoid" id="Q8BMK1"/>
<dbReference type="OMA" id="PAKYWDI"/>
<dbReference type="OrthoDB" id="417697at2759"/>
<dbReference type="PhylomeDB" id="Q8BMK1"/>
<dbReference type="TreeFam" id="TF323232"/>
<dbReference type="BioGRID-ORCS" id="52686">
    <property type="hits" value="11 hits in 81 CRISPR screens"/>
</dbReference>
<dbReference type="ChiTaRS" id="Mettl2">
    <property type="organism name" value="mouse"/>
</dbReference>
<dbReference type="PRO" id="PR:Q8BMK1"/>
<dbReference type="Proteomes" id="UP000000589">
    <property type="component" value="Chromosome 11"/>
</dbReference>
<dbReference type="RNAct" id="Q8BMK1">
    <property type="molecule type" value="protein"/>
</dbReference>
<dbReference type="Bgee" id="ENSMUSG00000020691">
    <property type="expression patterns" value="Expressed in ear vesicle and 242 other cell types or tissues"/>
</dbReference>
<dbReference type="GO" id="GO:0005737">
    <property type="term" value="C:cytoplasm"/>
    <property type="evidence" value="ECO:0000250"/>
    <property type="project" value="UniProtKB"/>
</dbReference>
<dbReference type="GO" id="GO:0016427">
    <property type="term" value="F:tRNA (cytidine) methyltransferase activity"/>
    <property type="evidence" value="ECO:0000250"/>
    <property type="project" value="UniProtKB"/>
</dbReference>
<dbReference type="GO" id="GO:0052735">
    <property type="term" value="F:tRNA (cytidine-3-)-methyltransferase activity"/>
    <property type="evidence" value="ECO:0000315"/>
    <property type="project" value="MGI"/>
</dbReference>
<dbReference type="GO" id="GO:0030488">
    <property type="term" value="P:tRNA methylation"/>
    <property type="evidence" value="ECO:0000315"/>
    <property type="project" value="MGI"/>
</dbReference>
<dbReference type="CDD" id="cd02440">
    <property type="entry name" value="AdoMet_MTases"/>
    <property type="match status" value="1"/>
</dbReference>
<dbReference type="Gene3D" id="3.40.50.150">
    <property type="entry name" value="Vaccinia Virus protein VP39"/>
    <property type="match status" value="1"/>
</dbReference>
<dbReference type="InterPro" id="IPR013217">
    <property type="entry name" value="Methyltransf_12"/>
</dbReference>
<dbReference type="InterPro" id="IPR026113">
    <property type="entry name" value="METTL2/6/8-like"/>
</dbReference>
<dbReference type="InterPro" id="IPR029063">
    <property type="entry name" value="SAM-dependent_MTases_sf"/>
</dbReference>
<dbReference type="PANTHER" id="PTHR22809">
    <property type="entry name" value="METHYLTRANSFERASE-RELATED"/>
    <property type="match status" value="1"/>
</dbReference>
<dbReference type="PANTHER" id="PTHR22809:SF4">
    <property type="entry name" value="TRNA N(3)-METHYLCYTIDINE METHYLTRANSFERASE METTL2A-RELATED"/>
    <property type="match status" value="1"/>
</dbReference>
<dbReference type="Pfam" id="PF08242">
    <property type="entry name" value="Methyltransf_12"/>
    <property type="match status" value="1"/>
</dbReference>
<dbReference type="PIRSF" id="PIRSF037755">
    <property type="entry name" value="Mettl2_prd"/>
    <property type="match status" value="1"/>
</dbReference>
<dbReference type="SUPFAM" id="SSF53335">
    <property type="entry name" value="S-adenosyl-L-methionine-dependent methyltransferases"/>
    <property type="match status" value="1"/>
</dbReference>